<keyword id="KW-0119">Carbohydrate metabolism</keyword>
<keyword id="KW-0479">Metal-binding</keyword>
<keyword id="KW-0520">NAD</keyword>
<keyword id="KW-0560">Oxidoreductase</keyword>
<keyword id="KW-1185">Reference proteome</keyword>
<keyword id="KW-0859">Xylose metabolism</keyword>
<keyword id="KW-0862">Zinc</keyword>
<protein>
    <recommendedName>
        <fullName>D-xylulose reductase</fullName>
        <ecNumber evidence="3">1.1.1.9</ecNumber>
    </recommendedName>
    <alternativeName>
        <fullName>Xylitol dehydrogenase</fullName>
        <shortName>XDH</shortName>
    </alternativeName>
</protein>
<feature type="chain" id="PRO_0000270925" description="D-xylulose reductase">
    <location>
        <begin position="1"/>
        <end position="356"/>
    </location>
</feature>
<feature type="binding site" evidence="1">
    <location>
        <position position="44"/>
    </location>
    <ligand>
        <name>Zn(2+)</name>
        <dbReference type="ChEBI" id="CHEBI:29105"/>
        <note>catalytic</note>
    </ligand>
</feature>
<feature type="binding site" evidence="1">
    <location>
        <position position="69"/>
    </location>
    <ligand>
        <name>Zn(2+)</name>
        <dbReference type="ChEBI" id="CHEBI:29105"/>
        <note>catalytic</note>
    </ligand>
</feature>
<feature type="binding site" evidence="1">
    <location>
        <position position="155"/>
    </location>
    <ligand>
        <name>Zn(2+)</name>
        <dbReference type="ChEBI" id="CHEBI:29105"/>
        <note>catalytic</note>
    </ligand>
</feature>
<feature type="binding site" evidence="2">
    <location>
        <begin position="179"/>
        <end position="184"/>
    </location>
    <ligand>
        <name>NAD(+)</name>
        <dbReference type="ChEBI" id="CHEBI:57540"/>
    </ligand>
</feature>
<gene>
    <name type="primary">XYL2</name>
    <name type="ordered locus">YLR070C</name>
</gene>
<organism>
    <name type="scientific">Saccharomyces cerevisiae (strain ATCC 204508 / S288c)</name>
    <name type="common">Baker's yeast</name>
    <dbReference type="NCBI Taxonomy" id="559292"/>
    <lineage>
        <taxon>Eukaryota</taxon>
        <taxon>Fungi</taxon>
        <taxon>Dikarya</taxon>
        <taxon>Ascomycota</taxon>
        <taxon>Saccharomycotina</taxon>
        <taxon>Saccharomycetes</taxon>
        <taxon>Saccharomycetales</taxon>
        <taxon>Saccharomycetaceae</taxon>
        <taxon>Saccharomyces</taxon>
    </lineage>
</organism>
<dbReference type="EC" id="1.1.1.9" evidence="3"/>
<dbReference type="EMBL" id="Z73242">
    <property type="protein sequence ID" value="CAA97627.1"/>
    <property type="molecule type" value="Genomic_DNA"/>
</dbReference>
<dbReference type="EMBL" id="BK006945">
    <property type="protein sequence ID" value="DAA09387.1"/>
    <property type="molecule type" value="Genomic_DNA"/>
</dbReference>
<dbReference type="PIR" id="S64902">
    <property type="entry name" value="S64902"/>
</dbReference>
<dbReference type="RefSeq" id="NP_013171.1">
    <property type="nucleotide sequence ID" value="NM_001181957.1"/>
</dbReference>
<dbReference type="SMR" id="Q07993"/>
<dbReference type="BioGRID" id="31344">
    <property type="interactions" value="74"/>
</dbReference>
<dbReference type="DIP" id="DIP-4533N"/>
<dbReference type="FunCoup" id="Q07993">
    <property type="interactions" value="612"/>
</dbReference>
<dbReference type="IntAct" id="Q07993">
    <property type="interactions" value="2"/>
</dbReference>
<dbReference type="STRING" id="4932.YLR070C"/>
<dbReference type="iPTMnet" id="Q07993"/>
<dbReference type="PaxDb" id="4932-YLR070C"/>
<dbReference type="PeptideAtlas" id="Q07993"/>
<dbReference type="EnsemblFungi" id="YLR070C_mRNA">
    <property type="protein sequence ID" value="YLR070C"/>
    <property type="gene ID" value="YLR070C"/>
</dbReference>
<dbReference type="GeneID" id="850759"/>
<dbReference type="KEGG" id="sce:YLR070C"/>
<dbReference type="AGR" id="SGD:S000004060"/>
<dbReference type="SGD" id="S000004060">
    <property type="gene designation" value="XYL2"/>
</dbReference>
<dbReference type="VEuPathDB" id="FungiDB:YLR070C"/>
<dbReference type="eggNOG" id="KOG0024">
    <property type="taxonomic scope" value="Eukaryota"/>
</dbReference>
<dbReference type="GeneTree" id="ENSGT00390000004074"/>
<dbReference type="HOGENOM" id="CLU_026673_11_5_1"/>
<dbReference type="InParanoid" id="Q07993"/>
<dbReference type="OMA" id="MQNSCAP"/>
<dbReference type="OrthoDB" id="3941538at2759"/>
<dbReference type="BioCyc" id="YEAST:YLR070C-MONOMER"/>
<dbReference type="BRENDA" id="1.1.1.9">
    <property type="organism ID" value="984"/>
</dbReference>
<dbReference type="SABIO-RK" id="Q07993"/>
<dbReference type="UniPathway" id="UPA00146">
    <property type="reaction ID" value="UER00577"/>
</dbReference>
<dbReference type="BioGRID-ORCS" id="850759">
    <property type="hits" value="2 hits in 10 CRISPR screens"/>
</dbReference>
<dbReference type="PRO" id="PR:Q07993"/>
<dbReference type="Proteomes" id="UP000002311">
    <property type="component" value="Chromosome XII"/>
</dbReference>
<dbReference type="RNAct" id="Q07993">
    <property type="molecule type" value="protein"/>
</dbReference>
<dbReference type="GO" id="GO:0046526">
    <property type="term" value="F:D-xylulose reductase activity"/>
    <property type="evidence" value="ECO:0000314"/>
    <property type="project" value="SGD"/>
</dbReference>
<dbReference type="GO" id="GO:0003939">
    <property type="term" value="F:L-iditol 2-dehydrogenase (NAD+) activity"/>
    <property type="evidence" value="ECO:0000318"/>
    <property type="project" value="GO_Central"/>
</dbReference>
<dbReference type="GO" id="GO:0008270">
    <property type="term" value="F:zinc ion binding"/>
    <property type="evidence" value="ECO:0007669"/>
    <property type="project" value="InterPro"/>
</dbReference>
<dbReference type="GO" id="GO:0042732">
    <property type="term" value="P:D-xylose metabolic process"/>
    <property type="evidence" value="ECO:0007669"/>
    <property type="project" value="UniProtKB-KW"/>
</dbReference>
<dbReference type="GO" id="GO:0019569">
    <property type="term" value="P:L-arabinose catabolic process to xylulose 5-phosphate"/>
    <property type="evidence" value="ECO:0007669"/>
    <property type="project" value="UniProtKB-UniPathway"/>
</dbReference>
<dbReference type="GO" id="GO:0006062">
    <property type="term" value="P:sorbitol catabolic process"/>
    <property type="evidence" value="ECO:0000318"/>
    <property type="project" value="GO_Central"/>
</dbReference>
<dbReference type="GO" id="GO:0005999">
    <property type="term" value="P:xylulose biosynthetic process"/>
    <property type="evidence" value="ECO:0000314"/>
    <property type="project" value="SGD"/>
</dbReference>
<dbReference type="CDD" id="cd05285">
    <property type="entry name" value="sorbitol_DH"/>
    <property type="match status" value="1"/>
</dbReference>
<dbReference type="FunFam" id="3.40.50.720:FF:000068">
    <property type="entry name" value="Sorbitol dehydrogenase"/>
    <property type="match status" value="1"/>
</dbReference>
<dbReference type="Gene3D" id="3.90.180.10">
    <property type="entry name" value="Medium-chain alcohol dehydrogenases, catalytic domain"/>
    <property type="match status" value="1"/>
</dbReference>
<dbReference type="Gene3D" id="3.40.50.720">
    <property type="entry name" value="NAD(P)-binding Rossmann-like Domain"/>
    <property type="match status" value="1"/>
</dbReference>
<dbReference type="InterPro" id="IPR013149">
    <property type="entry name" value="ADH-like_C"/>
</dbReference>
<dbReference type="InterPro" id="IPR013154">
    <property type="entry name" value="ADH-like_N"/>
</dbReference>
<dbReference type="InterPro" id="IPR002328">
    <property type="entry name" value="ADH_Zn_CS"/>
</dbReference>
<dbReference type="InterPro" id="IPR011032">
    <property type="entry name" value="GroES-like_sf"/>
</dbReference>
<dbReference type="InterPro" id="IPR036291">
    <property type="entry name" value="NAD(P)-bd_dom_sf"/>
</dbReference>
<dbReference type="InterPro" id="IPR020843">
    <property type="entry name" value="PKS_ER"/>
</dbReference>
<dbReference type="InterPro" id="IPR045306">
    <property type="entry name" value="SDH-like"/>
</dbReference>
<dbReference type="PANTHER" id="PTHR43161">
    <property type="entry name" value="SORBITOL DEHYDROGENASE"/>
    <property type="match status" value="1"/>
</dbReference>
<dbReference type="PANTHER" id="PTHR43161:SF9">
    <property type="entry name" value="SORBITOL DEHYDROGENASE"/>
    <property type="match status" value="1"/>
</dbReference>
<dbReference type="Pfam" id="PF08240">
    <property type="entry name" value="ADH_N"/>
    <property type="match status" value="1"/>
</dbReference>
<dbReference type="Pfam" id="PF00107">
    <property type="entry name" value="ADH_zinc_N"/>
    <property type="match status" value="1"/>
</dbReference>
<dbReference type="SMART" id="SM00829">
    <property type="entry name" value="PKS_ER"/>
    <property type="match status" value="1"/>
</dbReference>
<dbReference type="SUPFAM" id="SSF50129">
    <property type="entry name" value="GroES-like"/>
    <property type="match status" value="1"/>
</dbReference>
<dbReference type="SUPFAM" id="SSF51735">
    <property type="entry name" value="NAD(P)-binding Rossmann-fold domains"/>
    <property type="match status" value="1"/>
</dbReference>
<dbReference type="PROSITE" id="PS00059">
    <property type="entry name" value="ADH_ZINC"/>
    <property type="match status" value="1"/>
</dbReference>
<sequence>MTDLTTQEAIVLERPGKITLTNVSIPKISDPNEVIIQIKATGICGSDIHYYTHGRIANYVVESPMVLGHESSGIVALIGENVKTLKVGDRVALEPGIPDRFSPEMKEGRYNLDPNLKFAATPPFDGTLTKYYKTMKDFVYKLPDDVSFEEGALIEPLSVAIHANKLAKIKFGARCVVFGAGPIGLLAGKVASVFGAADVVFVDLLENKLETARQFGATHIVNSGDLPHGVTVDSVIKKAIGKKGADVVFECSGAEPCVRAGIEVCKAGGTIVQVGMGQEEIQFPISIIPTKELTFQGCFRYCQGDYSDSIELVSSRKLSLKPFITHRYSFKDAVEAFEETSHHPLNNIKTIIEGPE</sequence>
<proteinExistence type="evidence at protein level"/>
<accession>Q07993</accession>
<accession>D6VY71</accession>
<comment type="catalytic activity">
    <reaction evidence="3">
        <text>xylitol + NAD(+) = D-xylulose + NADH + H(+)</text>
        <dbReference type="Rhea" id="RHEA:20433"/>
        <dbReference type="ChEBI" id="CHEBI:15378"/>
        <dbReference type="ChEBI" id="CHEBI:17140"/>
        <dbReference type="ChEBI" id="CHEBI:17151"/>
        <dbReference type="ChEBI" id="CHEBI:57540"/>
        <dbReference type="ChEBI" id="CHEBI:57945"/>
        <dbReference type="EC" id="1.1.1.9"/>
    </reaction>
</comment>
<comment type="cofactor">
    <cofactor evidence="1">
        <name>Zn(2+)</name>
        <dbReference type="ChEBI" id="CHEBI:29105"/>
    </cofactor>
    <text evidence="1">Binds 1 zinc ion per subunit.</text>
</comment>
<comment type="biophysicochemical properties">
    <kinetics>
        <KM evidence="3">1.1 mM for D-xylose</KM>
        <KM evidence="3">240 uM for NADH</KM>
        <KM evidence="3">25 mM for xylitol</KM>
        <KM evidence="3">100 uM for NAD</KM>
    </kinetics>
</comment>
<comment type="pathway">
    <text>Carbohydrate degradation; L-arabinose degradation via L-arabinitol; D-xylulose 5-phosphate from L-arabinose (fungal route): step 4/5.</text>
</comment>
<comment type="induction">
    <text evidence="3">By xylose.</text>
</comment>
<comment type="similarity">
    <text evidence="4">Belongs to the zinc-containing alcohol dehydrogenase family.</text>
</comment>
<reference key="1">
    <citation type="journal article" date="1997" name="Nature">
        <title>The nucleotide sequence of Saccharomyces cerevisiae chromosome XII.</title>
        <authorList>
            <person name="Johnston M."/>
            <person name="Hillier L.W."/>
            <person name="Riles L."/>
            <person name="Albermann K."/>
            <person name="Andre B."/>
            <person name="Ansorge W."/>
            <person name="Benes V."/>
            <person name="Brueckner M."/>
            <person name="Delius H."/>
            <person name="Dubois E."/>
            <person name="Duesterhoeft A."/>
            <person name="Entian K.-D."/>
            <person name="Floeth M."/>
            <person name="Goffeau A."/>
            <person name="Hebling U."/>
            <person name="Heumann K."/>
            <person name="Heuss-Neitzel D."/>
            <person name="Hilbert H."/>
            <person name="Hilger F."/>
            <person name="Kleine K."/>
            <person name="Koetter P."/>
            <person name="Louis E.J."/>
            <person name="Messenguy F."/>
            <person name="Mewes H.-W."/>
            <person name="Miosga T."/>
            <person name="Moestl D."/>
            <person name="Mueller-Auer S."/>
            <person name="Nentwich U."/>
            <person name="Obermaier B."/>
            <person name="Piravandi E."/>
            <person name="Pohl T.M."/>
            <person name="Portetelle D."/>
            <person name="Purnelle B."/>
            <person name="Rechmann S."/>
            <person name="Rieger M."/>
            <person name="Rinke M."/>
            <person name="Rose M."/>
            <person name="Scharfe M."/>
            <person name="Scherens B."/>
            <person name="Scholler P."/>
            <person name="Schwager C."/>
            <person name="Schwarz S."/>
            <person name="Underwood A.P."/>
            <person name="Urrestarazu L.A."/>
            <person name="Vandenbol M."/>
            <person name="Verhasselt P."/>
            <person name="Vierendeels F."/>
            <person name="Voet M."/>
            <person name="Volckaert G."/>
            <person name="Voss H."/>
            <person name="Wambutt R."/>
            <person name="Wedler E."/>
            <person name="Wedler H."/>
            <person name="Zimmermann F.K."/>
            <person name="Zollner A."/>
            <person name="Hani J."/>
            <person name="Hoheisel J.D."/>
        </authorList>
    </citation>
    <scope>NUCLEOTIDE SEQUENCE [LARGE SCALE GENOMIC DNA]</scope>
    <source>
        <strain>ATCC 204508 / S288c</strain>
    </source>
</reference>
<reference key="2">
    <citation type="journal article" date="2014" name="G3 (Bethesda)">
        <title>The reference genome sequence of Saccharomyces cerevisiae: Then and now.</title>
        <authorList>
            <person name="Engel S.R."/>
            <person name="Dietrich F.S."/>
            <person name="Fisk D.G."/>
            <person name="Binkley G."/>
            <person name="Balakrishnan R."/>
            <person name="Costanzo M.C."/>
            <person name="Dwight S.S."/>
            <person name="Hitz B.C."/>
            <person name="Karra K."/>
            <person name="Nash R.S."/>
            <person name="Weng S."/>
            <person name="Wong E.D."/>
            <person name="Lloyd P."/>
            <person name="Skrzypek M.S."/>
            <person name="Miyasato S.R."/>
            <person name="Simison M."/>
            <person name="Cherry J.M."/>
        </authorList>
    </citation>
    <scope>GENOME REANNOTATION</scope>
    <source>
        <strain>ATCC 204508 / S288c</strain>
    </source>
</reference>
<reference key="3">
    <citation type="journal article" date="1999" name="FEBS Lett.">
        <title>Evidence that the gene YLR070c of Saccharomyces cerevisiae encodes a xylitol dehydrogenase.</title>
        <authorList>
            <person name="Richard P."/>
            <person name="Toivari M.H."/>
            <person name="Penttilae M."/>
        </authorList>
    </citation>
    <scope>INDUCTION</scope>
    <scope>BIOPHYSICOCHEMICAL PROPERTIES</scope>
    <scope>CATALYTIC ACTIVITY</scope>
</reference>
<name>XYL2_YEAST</name>
<evidence type="ECO:0000250" key="1"/>
<evidence type="ECO:0000255" key="2"/>
<evidence type="ECO:0000269" key="3">
    <source>
    </source>
</evidence>
<evidence type="ECO:0000305" key="4"/>